<keyword id="KW-0963">Cytoplasm</keyword>
<keyword id="KW-0235">DNA replication</keyword>
<keyword id="KW-0238">DNA-binding</keyword>
<gene>
    <name evidence="1" type="primary">tus</name>
    <name type="ordered locus">SCH_1487</name>
</gene>
<name>TUS_SALCH</name>
<dbReference type="EMBL" id="AE017220">
    <property type="protein sequence ID" value="AAX65393.1"/>
    <property type="molecule type" value="Genomic_DNA"/>
</dbReference>
<dbReference type="RefSeq" id="WP_000092493.1">
    <property type="nucleotide sequence ID" value="NC_006905.1"/>
</dbReference>
<dbReference type="SMR" id="Q57PG8"/>
<dbReference type="KEGG" id="sec:SCH_1487"/>
<dbReference type="HOGENOM" id="CLU_078181_0_0_6"/>
<dbReference type="Proteomes" id="UP000000538">
    <property type="component" value="Chromosome"/>
</dbReference>
<dbReference type="GO" id="GO:0005737">
    <property type="term" value="C:cytoplasm"/>
    <property type="evidence" value="ECO:0007669"/>
    <property type="project" value="UniProtKB-SubCell"/>
</dbReference>
<dbReference type="GO" id="GO:0003677">
    <property type="term" value="F:DNA binding"/>
    <property type="evidence" value="ECO:0007669"/>
    <property type="project" value="UniProtKB-UniRule"/>
</dbReference>
<dbReference type="GO" id="GO:0006274">
    <property type="term" value="P:DNA replication termination"/>
    <property type="evidence" value="ECO:0007669"/>
    <property type="project" value="UniProtKB-UniRule"/>
</dbReference>
<dbReference type="Gene3D" id="3.30.54.10">
    <property type="match status" value="1"/>
</dbReference>
<dbReference type="Gene3D" id="3.50.14.10">
    <property type="entry name" value="Replication terminator Tus, domain 1 superfamily/Replication terminator Tus"/>
    <property type="match status" value="1"/>
</dbReference>
<dbReference type="HAMAP" id="MF_00483">
    <property type="entry name" value="Rep_term_Tus"/>
    <property type="match status" value="1"/>
</dbReference>
<dbReference type="InterPro" id="IPR008865">
    <property type="entry name" value="DNA_replication_term_site-bd"/>
</dbReference>
<dbReference type="InterPro" id="IPR036381">
    <property type="entry name" value="Tus_dom1"/>
</dbReference>
<dbReference type="InterPro" id="IPR036384">
    <property type="entry name" value="Tus_sf"/>
</dbReference>
<dbReference type="NCBIfam" id="TIGR02648">
    <property type="entry name" value="rep_term_tus"/>
    <property type="match status" value="1"/>
</dbReference>
<dbReference type="Pfam" id="PF05472">
    <property type="entry name" value="Ter"/>
    <property type="match status" value="1"/>
</dbReference>
<dbReference type="SUPFAM" id="SSF56596">
    <property type="entry name" value="Replication terminator protein (Tus)"/>
    <property type="match status" value="1"/>
</dbReference>
<organism>
    <name type="scientific">Salmonella choleraesuis (strain SC-B67)</name>
    <dbReference type="NCBI Taxonomy" id="321314"/>
    <lineage>
        <taxon>Bacteria</taxon>
        <taxon>Pseudomonadati</taxon>
        <taxon>Pseudomonadota</taxon>
        <taxon>Gammaproteobacteria</taxon>
        <taxon>Enterobacterales</taxon>
        <taxon>Enterobacteriaceae</taxon>
        <taxon>Salmonella</taxon>
    </lineage>
</organism>
<feature type="chain" id="PRO_0000049417" description="DNA replication terminus site-binding protein">
    <location>
        <begin position="1"/>
        <end position="309"/>
    </location>
</feature>
<sequence length="309" mass="35513">MSRYDLVERLNGTFRQIEQHLAALTDNLQQHSLLIARVFSLPQVTKEAEHAPLDTIEVTQHLGKEAETLALRHYRHLFIQQQSENRSSKAAVRLPGVLCYQVDNAIQLDLENQIQRINQLKTTFEQMVTVESGLPSAARFEWVHRHLPGLITLNAYRTLTLINNPATIRFGWANKHIIKNLSRDEVLSQLKKSLASPRSVPPWTREQWQFKLEREYQDIAALPQQARLKIKRPVKVQPIARIWYKGQQKQVQHACPTPIIALINTDNGAGVPDIGGLENYDADNIQHRFKPQAQPLRLIIPRLHLYVAD</sequence>
<reference key="1">
    <citation type="journal article" date="2005" name="Nucleic Acids Res.">
        <title>The genome sequence of Salmonella enterica serovar Choleraesuis, a highly invasive and resistant zoonotic pathogen.</title>
        <authorList>
            <person name="Chiu C.-H."/>
            <person name="Tang P."/>
            <person name="Chu C."/>
            <person name="Hu S."/>
            <person name="Bao Q."/>
            <person name="Yu J."/>
            <person name="Chou Y.-Y."/>
            <person name="Wang H.-S."/>
            <person name="Lee Y.-S."/>
        </authorList>
    </citation>
    <scope>NUCLEOTIDE SEQUENCE [LARGE SCALE GENOMIC DNA]</scope>
    <source>
        <strain>SC-B67</strain>
    </source>
</reference>
<proteinExistence type="inferred from homology"/>
<accession>Q57PG8</accession>
<protein>
    <recommendedName>
        <fullName evidence="1">DNA replication terminus site-binding protein</fullName>
        <shortName evidence="1">Ter-binding protein</shortName>
    </recommendedName>
</protein>
<comment type="function">
    <text evidence="1">Trans-acting protein required for termination of DNA replication. Binds to DNA replication terminator sequences (terA to terF) to prevent the passage of replication forks. The termination efficiency will be affected by the affinity of this protein for the terminator sequence.</text>
</comment>
<comment type="subcellular location">
    <subcellularLocation>
        <location evidence="1">Cytoplasm</location>
    </subcellularLocation>
</comment>
<comment type="similarity">
    <text evidence="1">Belongs to the Tus family.</text>
</comment>
<evidence type="ECO:0000255" key="1">
    <source>
        <dbReference type="HAMAP-Rule" id="MF_00483"/>
    </source>
</evidence>